<comment type="function">
    <text evidence="1">Catalyzes the dehydration of D-mannonate.</text>
</comment>
<comment type="catalytic activity">
    <reaction evidence="1">
        <text>D-mannonate = 2-dehydro-3-deoxy-D-gluconate + H2O</text>
        <dbReference type="Rhea" id="RHEA:20097"/>
        <dbReference type="ChEBI" id="CHEBI:15377"/>
        <dbReference type="ChEBI" id="CHEBI:17767"/>
        <dbReference type="ChEBI" id="CHEBI:57990"/>
        <dbReference type="EC" id="4.2.1.8"/>
    </reaction>
</comment>
<comment type="cofactor">
    <cofactor evidence="1">
        <name>Fe(2+)</name>
        <dbReference type="ChEBI" id="CHEBI:29033"/>
    </cofactor>
    <cofactor evidence="1">
        <name>Mn(2+)</name>
        <dbReference type="ChEBI" id="CHEBI:29035"/>
    </cofactor>
</comment>
<comment type="pathway">
    <text evidence="1">Carbohydrate metabolism; pentose and glucuronate interconversion.</text>
</comment>
<comment type="similarity">
    <text evidence="1">Belongs to the mannonate dehydratase family.</text>
</comment>
<proteinExistence type="inferred from homology"/>
<organism>
    <name type="scientific">Escherichia coli O17:K52:H18 (strain UMN026 / ExPEC)</name>
    <dbReference type="NCBI Taxonomy" id="585056"/>
    <lineage>
        <taxon>Bacteria</taxon>
        <taxon>Pseudomonadati</taxon>
        <taxon>Pseudomonadota</taxon>
        <taxon>Gammaproteobacteria</taxon>
        <taxon>Enterobacterales</taxon>
        <taxon>Enterobacteriaceae</taxon>
        <taxon>Escherichia</taxon>
    </lineage>
</organism>
<name>UXUA_ECOLU</name>
<evidence type="ECO:0000255" key="1">
    <source>
        <dbReference type="HAMAP-Rule" id="MF_00106"/>
    </source>
</evidence>
<keyword id="KW-0408">Iron</keyword>
<keyword id="KW-0456">Lyase</keyword>
<keyword id="KW-0464">Manganese</keyword>
<sequence>MEQTWRWYGPNDPVSLADVRQAGATGVVTALHHIPNGEVWSVEEILKRKAIIEDAGLVWSVVESVPIHEDIKTHTGNYEQWIANYQQTLRNLAQCGIRTVCYNFMPVLDWTRTDLEYVLPDGSKALRFDQIEFAAFEMHILKRPGAEADYTEEEIAQAAERFATMSDEDKARLTRNIIAGLPGAEEGYTLDQFRKHLELYKDIDKAKLRENFAVFLKAIIPVAEEVGVRMAVHPDDPPRPILGLPRIVSTIEDMQWMVDTVNSMANGFTMCTGSYGVRADNDLVDMIKQFGPRIYFTHLRSTMREDNPKTFHEAAHLNGDVDMYEVVKAIVEEEHRRKAEGKEDLIPMRPDHGHQMLDDLKKKTNPGYSAIGRLKGLAEVRGVELAIQRAFFSR</sequence>
<reference key="1">
    <citation type="journal article" date="2009" name="PLoS Genet.">
        <title>Organised genome dynamics in the Escherichia coli species results in highly diverse adaptive paths.</title>
        <authorList>
            <person name="Touchon M."/>
            <person name="Hoede C."/>
            <person name="Tenaillon O."/>
            <person name="Barbe V."/>
            <person name="Baeriswyl S."/>
            <person name="Bidet P."/>
            <person name="Bingen E."/>
            <person name="Bonacorsi S."/>
            <person name="Bouchier C."/>
            <person name="Bouvet O."/>
            <person name="Calteau A."/>
            <person name="Chiapello H."/>
            <person name="Clermont O."/>
            <person name="Cruveiller S."/>
            <person name="Danchin A."/>
            <person name="Diard M."/>
            <person name="Dossat C."/>
            <person name="Karoui M.E."/>
            <person name="Frapy E."/>
            <person name="Garry L."/>
            <person name="Ghigo J.M."/>
            <person name="Gilles A.M."/>
            <person name="Johnson J."/>
            <person name="Le Bouguenec C."/>
            <person name="Lescat M."/>
            <person name="Mangenot S."/>
            <person name="Martinez-Jehanne V."/>
            <person name="Matic I."/>
            <person name="Nassif X."/>
            <person name="Oztas S."/>
            <person name="Petit M.A."/>
            <person name="Pichon C."/>
            <person name="Rouy Z."/>
            <person name="Ruf C.S."/>
            <person name="Schneider D."/>
            <person name="Tourret J."/>
            <person name="Vacherie B."/>
            <person name="Vallenet D."/>
            <person name="Medigue C."/>
            <person name="Rocha E.P.C."/>
            <person name="Denamur E."/>
        </authorList>
    </citation>
    <scope>NUCLEOTIDE SEQUENCE [LARGE SCALE GENOMIC DNA]</scope>
    <source>
        <strain>UMN026 / ExPEC</strain>
    </source>
</reference>
<protein>
    <recommendedName>
        <fullName evidence="1">Mannonate dehydratase</fullName>
        <ecNumber evidence="1">4.2.1.8</ecNumber>
    </recommendedName>
    <alternativeName>
        <fullName evidence="1">D-mannonate hydro-lyase</fullName>
    </alternativeName>
</protein>
<gene>
    <name evidence="1" type="primary">uxuA</name>
    <name type="ordered locus">ECUMN_4930</name>
</gene>
<dbReference type="EC" id="4.2.1.8" evidence="1"/>
<dbReference type="EMBL" id="CU928163">
    <property type="protein sequence ID" value="CAR16041.1"/>
    <property type="molecule type" value="Genomic_DNA"/>
</dbReference>
<dbReference type="RefSeq" id="WP_000438562.1">
    <property type="nucleotide sequence ID" value="NC_011751.1"/>
</dbReference>
<dbReference type="RefSeq" id="YP_002415509.1">
    <property type="nucleotide sequence ID" value="NC_011751.1"/>
</dbReference>
<dbReference type="SMR" id="B7NGX8"/>
<dbReference type="STRING" id="585056.ECUMN_4930"/>
<dbReference type="KEGG" id="eum:ECUMN_4930"/>
<dbReference type="PATRIC" id="fig|585056.7.peg.5092"/>
<dbReference type="HOGENOM" id="CLU_058621_2_0_6"/>
<dbReference type="UniPathway" id="UPA00246"/>
<dbReference type="Proteomes" id="UP000007097">
    <property type="component" value="Chromosome"/>
</dbReference>
<dbReference type="GO" id="GO:0008198">
    <property type="term" value="F:ferrous iron binding"/>
    <property type="evidence" value="ECO:0007669"/>
    <property type="project" value="TreeGrafter"/>
</dbReference>
<dbReference type="GO" id="GO:0030145">
    <property type="term" value="F:manganese ion binding"/>
    <property type="evidence" value="ECO:0007669"/>
    <property type="project" value="TreeGrafter"/>
</dbReference>
<dbReference type="GO" id="GO:0008927">
    <property type="term" value="F:mannonate dehydratase activity"/>
    <property type="evidence" value="ECO:0007669"/>
    <property type="project" value="UniProtKB-UniRule"/>
</dbReference>
<dbReference type="GO" id="GO:0042840">
    <property type="term" value="P:D-glucuronate catabolic process"/>
    <property type="evidence" value="ECO:0007669"/>
    <property type="project" value="TreeGrafter"/>
</dbReference>
<dbReference type="FunFam" id="3.20.20.150:FF:000004">
    <property type="entry name" value="Mannonate dehydratase"/>
    <property type="match status" value="1"/>
</dbReference>
<dbReference type="FunFam" id="3.20.20.150:FF:000005">
    <property type="entry name" value="Mannonate dehydratase"/>
    <property type="match status" value="1"/>
</dbReference>
<dbReference type="Gene3D" id="3.20.20.150">
    <property type="entry name" value="Divalent-metal-dependent TIM barrel enzymes"/>
    <property type="match status" value="2"/>
</dbReference>
<dbReference type="HAMAP" id="MF_00106">
    <property type="entry name" value="UxuA"/>
    <property type="match status" value="1"/>
</dbReference>
<dbReference type="InterPro" id="IPR004628">
    <property type="entry name" value="Man_deHydtase"/>
</dbReference>
<dbReference type="InterPro" id="IPR036237">
    <property type="entry name" value="Xyl_isomerase-like_sf"/>
</dbReference>
<dbReference type="NCBIfam" id="NF003027">
    <property type="entry name" value="PRK03906.1"/>
    <property type="match status" value="1"/>
</dbReference>
<dbReference type="NCBIfam" id="TIGR00695">
    <property type="entry name" value="uxuA"/>
    <property type="match status" value="1"/>
</dbReference>
<dbReference type="PANTHER" id="PTHR30387">
    <property type="entry name" value="MANNONATE DEHYDRATASE"/>
    <property type="match status" value="1"/>
</dbReference>
<dbReference type="PANTHER" id="PTHR30387:SF2">
    <property type="entry name" value="MANNONATE DEHYDRATASE"/>
    <property type="match status" value="1"/>
</dbReference>
<dbReference type="Pfam" id="PF03786">
    <property type="entry name" value="UxuA"/>
    <property type="match status" value="1"/>
</dbReference>
<dbReference type="PIRSF" id="PIRSF016049">
    <property type="entry name" value="Man_dehyd"/>
    <property type="match status" value="1"/>
</dbReference>
<dbReference type="SUPFAM" id="SSF51658">
    <property type="entry name" value="Xylose isomerase-like"/>
    <property type="match status" value="1"/>
</dbReference>
<accession>B7NGX8</accession>
<feature type="chain" id="PRO_1000197927" description="Mannonate dehydratase">
    <location>
        <begin position="1"/>
        <end position="394"/>
    </location>
</feature>